<sequence length="219" mass="24350">MAKKKFSKDWIHQHINDPYVKLAQQKGYRARAAFKLIEILEVEKLLKKGDVVVDLGSAPGSWSQVVRERLAGPGGVVDGRIIALDLLPMEPIAGVEFFQGDFRDDEVLHELERRVGNHAVDLVISDMAPNLSGVGVADSARIQHVCDLALEFSCAHLKPNGVLIVKAFHGSGFSQIVQSFKQRFKRVVERKPKASRDKSSETFLVARDLKDPVLNQTTE</sequence>
<gene>
    <name evidence="1" type="primary">rlmE</name>
    <name evidence="1" type="synonym">ftsJ</name>
    <name evidence="1" type="synonym">rrmJ</name>
    <name type="ordered locus">BAV0930</name>
</gene>
<dbReference type="EC" id="2.1.1.166" evidence="1"/>
<dbReference type="EMBL" id="AM167904">
    <property type="protein sequence ID" value="CAJ48541.1"/>
    <property type="molecule type" value="Genomic_DNA"/>
</dbReference>
<dbReference type="RefSeq" id="WP_012416620.1">
    <property type="nucleotide sequence ID" value="NC_010645.1"/>
</dbReference>
<dbReference type="SMR" id="Q2KVR5"/>
<dbReference type="STRING" id="360910.BAV0930"/>
<dbReference type="GeneID" id="92935877"/>
<dbReference type="KEGG" id="bav:BAV0930"/>
<dbReference type="eggNOG" id="COG0293">
    <property type="taxonomic scope" value="Bacteria"/>
</dbReference>
<dbReference type="HOGENOM" id="CLU_009422_4_1_4"/>
<dbReference type="OrthoDB" id="9790080at2"/>
<dbReference type="Proteomes" id="UP000001977">
    <property type="component" value="Chromosome"/>
</dbReference>
<dbReference type="GO" id="GO:0005737">
    <property type="term" value="C:cytoplasm"/>
    <property type="evidence" value="ECO:0007669"/>
    <property type="project" value="UniProtKB-SubCell"/>
</dbReference>
<dbReference type="GO" id="GO:0008650">
    <property type="term" value="F:rRNA (uridine-2'-O-)-methyltransferase activity"/>
    <property type="evidence" value="ECO:0007669"/>
    <property type="project" value="UniProtKB-UniRule"/>
</dbReference>
<dbReference type="FunFam" id="3.40.50.150:FF:000005">
    <property type="entry name" value="Ribosomal RNA large subunit methyltransferase E"/>
    <property type="match status" value="1"/>
</dbReference>
<dbReference type="Gene3D" id="3.40.50.150">
    <property type="entry name" value="Vaccinia Virus protein VP39"/>
    <property type="match status" value="1"/>
</dbReference>
<dbReference type="HAMAP" id="MF_01547">
    <property type="entry name" value="RNA_methyltr_E"/>
    <property type="match status" value="1"/>
</dbReference>
<dbReference type="InterPro" id="IPR050082">
    <property type="entry name" value="RNA_methyltr_RlmE"/>
</dbReference>
<dbReference type="InterPro" id="IPR002877">
    <property type="entry name" value="RNA_MeTrfase_FtsJ_dom"/>
</dbReference>
<dbReference type="InterPro" id="IPR015507">
    <property type="entry name" value="rRNA-MeTfrase_E"/>
</dbReference>
<dbReference type="InterPro" id="IPR029063">
    <property type="entry name" value="SAM-dependent_MTases_sf"/>
</dbReference>
<dbReference type="PANTHER" id="PTHR10920">
    <property type="entry name" value="RIBOSOMAL RNA METHYLTRANSFERASE"/>
    <property type="match status" value="1"/>
</dbReference>
<dbReference type="PANTHER" id="PTHR10920:SF18">
    <property type="entry name" value="RRNA METHYLTRANSFERASE 2, MITOCHONDRIAL"/>
    <property type="match status" value="1"/>
</dbReference>
<dbReference type="Pfam" id="PF01728">
    <property type="entry name" value="FtsJ"/>
    <property type="match status" value="1"/>
</dbReference>
<dbReference type="PIRSF" id="PIRSF005461">
    <property type="entry name" value="23S_rRNA_mtase"/>
    <property type="match status" value="1"/>
</dbReference>
<dbReference type="SUPFAM" id="SSF53335">
    <property type="entry name" value="S-adenosyl-L-methionine-dependent methyltransferases"/>
    <property type="match status" value="1"/>
</dbReference>
<name>RLME_BORA1</name>
<organism>
    <name type="scientific">Bordetella avium (strain 197N)</name>
    <dbReference type="NCBI Taxonomy" id="360910"/>
    <lineage>
        <taxon>Bacteria</taxon>
        <taxon>Pseudomonadati</taxon>
        <taxon>Pseudomonadota</taxon>
        <taxon>Betaproteobacteria</taxon>
        <taxon>Burkholderiales</taxon>
        <taxon>Alcaligenaceae</taxon>
        <taxon>Bordetella</taxon>
    </lineage>
</organism>
<reference key="1">
    <citation type="journal article" date="2006" name="J. Bacteriol.">
        <title>Comparison of the genome sequence of the poultry pathogen Bordetella avium with those of B. bronchiseptica, B. pertussis, and B. parapertussis reveals extensive diversity in surface structures associated with host interaction.</title>
        <authorList>
            <person name="Sebaihia M."/>
            <person name="Preston A."/>
            <person name="Maskell D.J."/>
            <person name="Kuzmiak H."/>
            <person name="Connell T.D."/>
            <person name="King N.D."/>
            <person name="Orndorff P.E."/>
            <person name="Miyamoto D.M."/>
            <person name="Thomson N.R."/>
            <person name="Harris D."/>
            <person name="Goble A."/>
            <person name="Lord A."/>
            <person name="Murphy L."/>
            <person name="Quail M.A."/>
            <person name="Rutter S."/>
            <person name="Squares R."/>
            <person name="Squares S."/>
            <person name="Woodward J."/>
            <person name="Parkhill J."/>
            <person name="Temple L.M."/>
        </authorList>
    </citation>
    <scope>NUCLEOTIDE SEQUENCE [LARGE SCALE GENOMIC DNA]</scope>
    <source>
        <strain>197N</strain>
    </source>
</reference>
<feature type="chain" id="PRO_0000282728" description="Ribosomal RNA large subunit methyltransferase E">
    <location>
        <begin position="1"/>
        <end position="219"/>
    </location>
</feature>
<feature type="active site" description="Proton acceptor" evidence="1">
    <location>
        <position position="166"/>
    </location>
</feature>
<feature type="binding site" evidence="1">
    <location>
        <position position="60"/>
    </location>
    <ligand>
        <name>S-adenosyl-L-methionine</name>
        <dbReference type="ChEBI" id="CHEBI:59789"/>
    </ligand>
</feature>
<feature type="binding site" evidence="1">
    <location>
        <position position="62"/>
    </location>
    <ligand>
        <name>S-adenosyl-L-methionine</name>
        <dbReference type="ChEBI" id="CHEBI:59789"/>
    </ligand>
</feature>
<feature type="binding site" evidence="1">
    <location>
        <position position="85"/>
    </location>
    <ligand>
        <name>S-adenosyl-L-methionine</name>
        <dbReference type="ChEBI" id="CHEBI:59789"/>
    </ligand>
</feature>
<feature type="binding site" evidence="1">
    <location>
        <position position="101"/>
    </location>
    <ligand>
        <name>S-adenosyl-L-methionine</name>
        <dbReference type="ChEBI" id="CHEBI:59789"/>
    </ligand>
</feature>
<feature type="binding site" evidence="1">
    <location>
        <position position="126"/>
    </location>
    <ligand>
        <name>S-adenosyl-L-methionine</name>
        <dbReference type="ChEBI" id="CHEBI:59789"/>
    </ligand>
</feature>
<accession>Q2KVR5</accession>
<keyword id="KW-0963">Cytoplasm</keyword>
<keyword id="KW-0489">Methyltransferase</keyword>
<keyword id="KW-1185">Reference proteome</keyword>
<keyword id="KW-0698">rRNA processing</keyword>
<keyword id="KW-0949">S-adenosyl-L-methionine</keyword>
<keyword id="KW-0808">Transferase</keyword>
<protein>
    <recommendedName>
        <fullName evidence="1">Ribosomal RNA large subunit methyltransferase E</fullName>
        <ecNumber evidence="1">2.1.1.166</ecNumber>
    </recommendedName>
    <alternativeName>
        <fullName evidence="1">23S rRNA Um2552 methyltransferase</fullName>
    </alternativeName>
    <alternativeName>
        <fullName evidence="1">rRNA (uridine-2'-O-)-methyltransferase</fullName>
    </alternativeName>
</protein>
<proteinExistence type="inferred from homology"/>
<evidence type="ECO:0000255" key="1">
    <source>
        <dbReference type="HAMAP-Rule" id="MF_01547"/>
    </source>
</evidence>
<comment type="function">
    <text evidence="1">Specifically methylates the uridine in position 2552 of 23S rRNA at the 2'-O position of the ribose in the fully assembled 50S ribosomal subunit.</text>
</comment>
<comment type="catalytic activity">
    <reaction evidence="1">
        <text>uridine(2552) in 23S rRNA + S-adenosyl-L-methionine = 2'-O-methyluridine(2552) in 23S rRNA + S-adenosyl-L-homocysteine + H(+)</text>
        <dbReference type="Rhea" id="RHEA:42720"/>
        <dbReference type="Rhea" id="RHEA-COMP:10202"/>
        <dbReference type="Rhea" id="RHEA-COMP:10203"/>
        <dbReference type="ChEBI" id="CHEBI:15378"/>
        <dbReference type="ChEBI" id="CHEBI:57856"/>
        <dbReference type="ChEBI" id="CHEBI:59789"/>
        <dbReference type="ChEBI" id="CHEBI:65315"/>
        <dbReference type="ChEBI" id="CHEBI:74478"/>
        <dbReference type="EC" id="2.1.1.166"/>
    </reaction>
</comment>
<comment type="subcellular location">
    <subcellularLocation>
        <location evidence="1">Cytoplasm</location>
    </subcellularLocation>
</comment>
<comment type="similarity">
    <text evidence="1">Belongs to the class I-like SAM-binding methyltransferase superfamily. RNA methyltransferase RlmE family.</text>
</comment>